<feature type="chain" id="PRO_0000150915" description="UPF0147 protein TK2131">
    <location>
        <begin position="1"/>
        <end position="83"/>
    </location>
</feature>
<keyword id="KW-1185">Reference proteome</keyword>
<organism>
    <name type="scientific">Thermococcus kodakarensis (strain ATCC BAA-918 / JCM 12380 / KOD1)</name>
    <name type="common">Pyrococcus kodakaraensis (strain KOD1)</name>
    <dbReference type="NCBI Taxonomy" id="69014"/>
    <lineage>
        <taxon>Archaea</taxon>
        <taxon>Methanobacteriati</taxon>
        <taxon>Methanobacteriota</taxon>
        <taxon>Thermococci</taxon>
        <taxon>Thermococcales</taxon>
        <taxon>Thermococcaceae</taxon>
        <taxon>Thermococcus</taxon>
    </lineage>
</organism>
<gene>
    <name type="ordered locus">TK2131</name>
</gene>
<name>Y2131_THEKO</name>
<reference key="1">
    <citation type="journal article" date="2005" name="Genome Res.">
        <title>Complete genome sequence of the hyperthermophilic archaeon Thermococcus kodakaraensis KOD1 and comparison with Pyrococcus genomes.</title>
        <authorList>
            <person name="Fukui T."/>
            <person name="Atomi H."/>
            <person name="Kanai T."/>
            <person name="Matsumi R."/>
            <person name="Fujiwara S."/>
            <person name="Imanaka T."/>
        </authorList>
    </citation>
    <scope>NUCLEOTIDE SEQUENCE [LARGE SCALE GENOMIC DNA]</scope>
    <source>
        <strain>ATCC BAA-918 / JCM 12380 / KOD1</strain>
    </source>
</reference>
<proteinExistence type="inferred from homology"/>
<protein>
    <recommendedName>
        <fullName evidence="1">UPF0147 protein TK2131</fullName>
    </recommendedName>
</protein>
<evidence type="ECO:0000255" key="1">
    <source>
        <dbReference type="HAMAP-Rule" id="MF_00342"/>
    </source>
</evidence>
<accession>Q5JHG1</accession>
<comment type="similarity">
    <text evidence="1">Belongs to the UPF0147 family.</text>
</comment>
<dbReference type="EMBL" id="AP006878">
    <property type="protein sequence ID" value="BAD86320.1"/>
    <property type="molecule type" value="Genomic_DNA"/>
</dbReference>
<dbReference type="RefSeq" id="WP_011251081.1">
    <property type="nucleotide sequence ID" value="NC_006624.1"/>
</dbReference>
<dbReference type="SMR" id="Q5JHG1"/>
<dbReference type="FunCoup" id="Q5JHG1">
    <property type="interactions" value="2"/>
</dbReference>
<dbReference type="STRING" id="69014.TK2131"/>
<dbReference type="EnsemblBacteria" id="BAD86320">
    <property type="protein sequence ID" value="BAD86320"/>
    <property type="gene ID" value="TK2131"/>
</dbReference>
<dbReference type="GeneID" id="78448667"/>
<dbReference type="KEGG" id="tko:TK2131"/>
<dbReference type="PATRIC" id="fig|69014.16.peg.2087"/>
<dbReference type="eggNOG" id="arCOG04308">
    <property type="taxonomic scope" value="Archaea"/>
</dbReference>
<dbReference type="HOGENOM" id="CLU_165882_1_0_2"/>
<dbReference type="InParanoid" id="Q5JHG1"/>
<dbReference type="OrthoDB" id="65304at2157"/>
<dbReference type="PhylomeDB" id="Q5JHG1"/>
<dbReference type="Proteomes" id="UP000000536">
    <property type="component" value="Chromosome"/>
</dbReference>
<dbReference type="Gene3D" id="1.20.1440.50">
    <property type="entry name" value="Ta0600-like"/>
    <property type="match status" value="1"/>
</dbReference>
<dbReference type="HAMAP" id="MF_00342">
    <property type="entry name" value="UPF0147"/>
    <property type="match status" value="1"/>
</dbReference>
<dbReference type="InterPro" id="IPR023130">
    <property type="entry name" value="Ta0600-like_sf"/>
</dbReference>
<dbReference type="InterPro" id="IPR005354">
    <property type="entry name" value="UPF0147"/>
</dbReference>
<dbReference type="NCBIfam" id="NF003319">
    <property type="entry name" value="PRK04330.1"/>
    <property type="match status" value="1"/>
</dbReference>
<dbReference type="Pfam" id="PF03685">
    <property type="entry name" value="UPF0147"/>
    <property type="match status" value="1"/>
</dbReference>
<dbReference type="SUPFAM" id="SSF158436">
    <property type="entry name" value="Ta0600-like"/>
    <property type="match status" value="1"/>
</dbReference>
<sequence length="83" mass="9372">MSELIQQIVQVLKEQVVQDTVVPRNIRRAAEQAIEVLLDESRDPAVRAADAIAILEEISEDPNMPMHTRTIIWEVLGALEQVK</sequence>